<feature type="chain" id="PRO_1000079136" description="Enolase">
    <location>
        <begin position="1"/>
        <end position="429"/>
    </location>
</feature>
<feature type="active site" description="Proton donor" evidence="1">
    <location>
        <position position="205"/>
    </location>
</feature>
<feature type="active site" description="Proton acceptor" evidence="1">
    <location>
        <position position="338"/>
    </location>
</feature>
<feature type="binding site" evidence="1">
    <location>
        <position position="163"/>
    </location>
    <ligand>
        <name>(2R)-2-phosphoglycerate</name>
        <dbReference type="ChEBI" id="CHEBI:58289"/>
    </ligand>
</feature>
<feature type="binding site" evidence="1">
    <location>
        <position position="242"/>
    </location>
    <ligand>
        <name>Mg(2+)</name>
        <dbReference type="ChEBI" id="CHEBI:18420"/>
    </ligand>
</feature>
<feature type="binding site" evidence="1">
    <location>
        <position position="286"/>
    </location>
    <ligand>
        <name>Mg(2+)</name>
        <dbReference type="ChEBI" id="CHEBI:18420"/>
    </ligand>
</feature>
<feature type="binding site" evidence="1">
    <location>
        <position position="313"/>
    </location>
    <ligand>
        <name>Mg(2+)</name>
        <dbReference type="ChEBI" id="CHEBI:18420"/>
    </ligand>
</feature>
<feature type="binding site" evidence="1">
    <location>
        <position position="338"/>
    </location>
    <ligand>
        <name>(2R)-2-phosphoglycerate</name>
        <dbReference type="ChEBI" id="CHEBI:58289"/>
    </ligand>
</feature>
<feature type="binding site" evidence="1">
    <location>
        <position position="367"/>
    </location>
    <ligand>
        <name>(2R)-2-phosphoglycerate</name>
        <dbReference type="ChEBI" id="CHEBI:58289"/>
    </ligand>
</feature>
<feature type="binding site" evidence="1">
    <location>
        <position position="368"/>
    </location>
    <ligand>
        <name>(2R)-2-phosphoglycerate</name>
        <dbReference type="ChEBI" id="CHEBI:58289"/>
    </ligand>
</feature>
<feature type="binding site" evidence="1">
    <location>
        <position position="389"/>
    </location>
    <ligand>
        <name>(2R)-2-phosphoglycerate</name>
        <dbReference type="ChEBI" id="CHEBI:58289"/>
    </ligand>
</feature>
<accession>A5GEW5</accession>
<protein>
    <recommendedName>
        <fullName evidence="1">Enolase</fullName>
        <ecNumber evidence="1">4.2.1.11</ecNumber>
    </recommendedName>
    <alternativeName>
        <fullName evidence="1">2-phospho-D-glycerate hydro-lyase</fullName>
    </alternativeName>
    <alternativeName>
        <fullName evidence="1">2-phosphoglycerate dehydratase</fullName>
    </alternativeName>
</protein>
<reference key="1">
    <citation type="submission" date="2007-05" db="EMBL/GenBank/DDBJ databases">
        <title>Complete sequence of Geobacter uraniireducens Rf4.</title>
        <authorList>
            <consortium name="US DOE Joint Genome Institute"/>
            <person name="Copeland A."/>
            <person name="Lucas S."/>
            <person name="Lapidus A."/>
            <person name="Barry K."/>
            <person name="Detter J.C."/>
            <person name="Glavina del Rio T."/>
            <person name="Hammon N."/>
            <person name="Israni S."/>
            <person name="Dalin E."/>
            <person name="Tice H."/>
            <person name="Pitluck S."/>
            <person name="Chertkov O."/>
            <person name="Brettin T."/>
            <person name="Bruce D."/>
            <person name="Han C."/>
            <person name="Schmutz J."/>
            <person name="Larimer F."/>
            <person name="Land M."/>
            <person name="Hauser L."/>
            <person name="Kyrpides N."/>
            <person name="Mikhailova N."/>
            <person name="Shelobolina E."/>
            <person name="Aklujkar M."/>
            <person name="Lovley D."/>
            <person name="Richardson P."/>
        </authorList>
    </citation>
    <scope>NUCLEOTIDE SEQUENCE [LARGE SCALE GENOMIC DNA]</scope>
    <source>
        <strain>ATCC BAA-1134 / JCM 13001 / Rf4</strain>
    </source>
</reference>
<dbReference type="EC" id="4.2.1.11" evidence="1"/>
<dbReference type="EMBL" id="CP000698">
    <property type="protein sequence ID" value="ABQ25970.1"/>
    <property type="molecule type" value="Genomic_DNA"/>
</dbReference>
<dbReference type="RefSeq" id="WP_011938675.1">
    <property type="nucleotide sequence ID" value="NC_009483.1"/>
</dbReference>
<dbReference type="SMR" id="A5GEW5"/>
<dbReference type="STRING" id="351605.Gura_1780"/>
<dbReference type="KEGG" id="gur:Gura_1780"/>
<dbReference type="HOGENOM" id="CLU_031223_2_1_7"/>
<dbReference type="OrthoDB" id="9804716at2"/>
<dbReference type="UniPathway" id="UPA00109">
    <property type="reaction ID" value="UER00187"/>
</dbReference>
<dbReference type="Proteomes" id="UP000006695">
    <property type="component" value="Chromosome"/>
</dbReference>
<dbReference type="GO" id="GO:0009986">
    <property type="term" value="C:cell surface"/>
    <property type="evidence" value="ECO:0007669"/>
    <property type="project" value="UniProtKB-SubCell"/>
</dbReference>
<dbReference type="GO" id="GO:0005576">
    <property type="term" value="C:extracellular region"/>
    <property type="evidence" value="ECO:0007669"/>
    <property type="project" value="UniProtKB-SubCell"/>
</dbReference>
<dbReference type="GO" id="GO:0000015">
    <property type="term" value="C:phosphopyruvate hydratase complex"/>
    <property type="evidence" value="ECO:0007669"/>
    <property type="project" value="InterPro"/>
</dbReference>
<dbReference type="GO" id="GO:0000287">
    <property type="term" value="F:magnesium ion binding"/>
    <property type="evidence" value="ECO:0007669"/>
    <property type="project" value="UniProtKB-UniRule"/>
</dbReference>
<dbReference type="GO" id="GO:0004634">
    <property type="term" value="F:phosphopyruvate hydratase activity"/>
    <property type="evidence" value="ECO:0007669"/>
    <property type="project" value="UniProtKB-UniRule"/>
</dbReference>
<dbReference type="GO" id="GO:0006096">
    <property type="term" value="P:glycolytic process"/>
    <property type="evidence" value="ECO:0007669"/>
    <property type="project" value="UniProtKB-UniRule"/>
</dbReference>
<dbReference type="CDD" id="cd03313">
    <property type="entry name" value="enolase"/>
    <property type="match status" value="1"/>
</dbReference>
<dbReference type="FunFam" id="3.20.20.120:FF:000001">
    <property type="entry name" value="Enolase"/>
    <property type="match status" value="1"/>
</dbReference>
<dbReference type="FunFam" id="3.30.390.10:FF:000001">
    <property type="entry name" value="Enolase"/>
    <property type="match status" value="1"/>
</dbReference>
<dbReference type="Gene3D" id="3.20.20.120">
    <property type="entry name" value="Enolase-like C-terminal domain"/>
    <property type="match status" value="1"/>
</dbReference>
<dbReference type="Gene3D" id="3.30.390.10">
    <property type="entry name" value="Enolase-like, N-terminal domain"/>
    <property type="match status" value="1"/>
</dbReference>
<dbReference type="HAMAP" id="MF_00318">
    <property type="entry name" value="Enolase"/>
    <property type="match status" value="1"/>
</dbReference>
<dbReference type="InterPro" id="IPR000941">
    <property type="entry name" value="Enolase"/>
</dbReference>
<dbReference type="InterPro" id="IPR036849">
    <property type="entry name" value="Enolase-like_C_sf"/>
</dbReference>
<dbReference type="InterPro" id="IPR029017">
    <property type="entry name" value="Enolase-like_N"/>
</dbReference>
<dbReference type="InterPro" id="IPR020810">
    <property type="entry name" value="Enolase_C"/>
</dbReference>
<dbReference type="InterPro" id="IPR020809">
    <property type="entry name" value="Enolase_CS"/>
</dbReference>
<dbReference type="InterPro" id="IPR020811">
    <property type="entry name" value="Enolase_N"/>
</dbReference>
<dbReference type="NCBIfam" id="TIGR01060">
    <property type="entry name" value="eno"/>
    <property type="match status" value="1"/>
</dbReference>
<dbReference type="PANTHER" id="PTHR11902">
    <property type="entry name" value="ENOLASE"/>
    <property type="match status" value="1"/>
</dbReference>
<dbReference type="PANTHER" id="PTHR11902:SF1">
    <property type="entry name" value="ENOLASE"/>
    <property type="match status" value="1"/>
</dbReference>
<dbReference type="Pfam" id="PF00113">
    <property type="entry name" value="Enolase_C"/>
    <property type="match status" value="1"/>
</dbReference>
<dbReference type="Pfam" id="PF03952">
    <property type="entry name" value="Enolase_N"/>
    <property type="match status" value="1"/>
</dbReference>
<dbReference type="PIRSF" id="PIRSF001400">
    <property type="entry name" value="Enolase"/>
    <property type="match status" value="1"/>
</dbReference>
<dbReference type="PRINTS" id="PR00148">
    <property type="entry name" value="ENOLASE"/>
</dbReference>
<dbReference type="SFLD" id="SFLDS00001">
    <property type="entry name" value="Enolase"/>
    <property type="match status" value="1"/>
</dbReference>
<dbReference type="SFLD" id="SFLDF00002">
    <property type="entry name" value="enolase"/>
    <property type="match status" value="1"/>
</dbReference>
<dbReference type="SMART" id="SM01192">
    <property type="entry name" value="Enolase_C"/>
    <property type="match status" value="1"/>
</dbReference>
<dbReference type="SMART" id="SM01193">
    <property type="entry name" value="Enolase_N"/>
    <property type="match status" value="1"/>
</dbReference>
<dbReference type="SUPFAM" id="SSF51604">
    <property type="entry name" value="Enolase C-terminal domain-like"/>
    <property type="match status" value="1"/>
</dbReference>
<dbReference type="SUPFAM" id="SSF54826">
    <property type="entry name" value="Enolase N-terminal domain-like"/>
    <property type="match status" value="1"/>
</dbReference>
<dbReference type="PROSITE" id="PS00164">
    <property type="entry name" value="ENOLASE"/>
    <property type="match status" value="1"/>
</dbReference>
<sequence>MSQITDVYAREILDSRGNPTLEVEVFLESGAMGRAAVPSGASTGEREALELRDGDKGRYLGKGVLKAVANVNDIIADEVIGMEATDQVGIDRKMLDLDGTEYKSKLGANAILGVSLAVAKAAADEVGLSLYQYIGGSNAKELPLPMMNIINGGAHADNNVDIQEFMIMPAGAKNFAEALRMGAEIFHALKAVLKAKGYNTAVGDEGGFAPNLKSNEEALQVIMEAITKAGFKPGEDVLLALDVASSELFKDGVYTLENEAQPQKTADQLIDFYENLVNKYPIISIEDGMAENDWDGWKKMTERLGKRIQIVGDDLFVTNPRILKEGIDKGIANSILIKLNQIGTLTETLDAIEMAKRAGYTTVISHRSGETEDTTLADLSVAVNAGQIKTGSLCRTDRVCKYNQLLRIEDELDAVALFRGKEVFYNLKK</sequence>
<keyword id="KW-0963">Cytoplasm</keyword>
<keyword id="KW-0324">Glycolysis</keyword>
<keyword id="KW-0456">Lyase</keyword>
<keyword id="KW-0460">Magnesium</keyword>
<keyword id="KW-0479">Metal-binding</keyword>
<keyword id="KW-1185">Reference proteome</keyword>
<keyword id="KW-0964">Secreted</keyword>
<name>ENO_GEOUR</name>
<organism>
    <name type="scientific">Geotalea uraniireducens (strain Rf4)</name>
    <name type="common">Geobacter uraniireducens</name>
    <dbReference type="NCBI Taxonomy" id="351605"/>
    <lineage>
        <taxon>Bacteria</taxon>
        <taxon>Pseudomonadati</taxon>
        <taxon>Thermodesulfobacteriota</taxon>
        <taxon>Desulfuromonadia</taxon>
        <taxon>Geobacterales</taxon>
        <taxon>Geobacteraceae</taxon>
        <taxon>Geotalea</taxon>
    </lineage>
</organism>
<comment type="function">
    <text evidence="1">Catalyzes the reversible conversion of 2-phosphoglycerate (2-PG) into phosphoenolpyruvate (PEP). It is essential for the degradation of carbohydrates via glycolysis.</text>
</comment>
<comment type="catalytic activity">
    <reaction evidence="1">
        <text>(2R)-2-phosphoglycerate = phosphoenolpyruvate + H2O</text>
        <dbReference type="Rhea" id="RHEA:10164"/>
        <dbReference type="ChEBI" id="CHEBI:15377"/>
        <dbReference type="ChEBI" id="CHEBI:58289"/>
        <dbReference type="ChEBI" id="CHEBI:58702"/>
        <dbReference type="EC" id="4.2.1.11"/>
    </reaction>
</comment>
<comment type="cofactor">
    <cofactor evidence="1">
        <name>Mg(2+)</name>
        <dbReference type="ChEBI" id="CHEBI:18420"/>
    </cofactor>
    <text evidence="1">Binds a second Mg(2+) ion via substrate during catalysis.</text>
</comment>
<comment type="pathway">
    <text evidence="1">Carbohydrate degradation; glycolysis; pyruvate from D-glyceraldehyde 3-phosphate: step 4/5.</text>
</comment>
<comment type="subcellular location">
    <subcellularLocation>
        <location evidence="1">Cytoplasm</location>
    </subcellularLocation>
    <subcellularLocation>
        <location evidence="1">Secreted</location>
    </subcellularLocation>
    <subcellularLocation>
        <location evidence="1">Cell surface</location>
    </subcellularLocation>
    <text evidence="1">Fractions of enolase are present in both the cytoplasm and on the cell surface.</text>
</comment>
<comment type="similarity">
    <text evidence="1">Belongs to the enolase family.</text>
</comment>
<gene>
    <name evidence="1" type="primary">eno</name>
    <name type="ordered locus">Gura_1780</name>
</gene>
<evidence type="ECO:0000255" key="1">
    <source>
        <dbReference type="HAMAP-Rule" id="MF_00318"/>
    </source>
</evidence>
<proteinExistence type="inferred from homology"/>